<evidence type="ECO:0000255" key="1">
    <source>
        <dbReference type="HAMAP-Rule" id="MF_01571"/>
    </source>
</evidence>
<organism>
    <name type="scientific">Agathobacter rectalis (strain ATCC 33656 / DSM 3377 / JCM 17463 / KCTC 5835 / VPI 0990)</name>
    <name type="common">Eubacterium rectale</name>
    <dbReference type="NCBI Taxonomy" id="515619"/>
    <lineage>
        <taxon>Bacteria</taxon>
        <taxon>Bacillati</taxon>
        <taxon>Bacillota</taxon>
        <taxon>Clostridia</taxon>
        <taxon>Lachnospirales</taxon>
        <taxon>Lachnospiraceae</taxon>
        <taxon>Agathobacter</taxon>
    </lineage>
</organism>
<gene>
    <name evidence="1" type="primary">proS</name>
    <name type="ordered locus">EUBREC_0523</name>
</gene>
<keyword id="KW-0030">Aminoacyl-tRNA synthetase</keyword>
<keyword id="KW-0067">ATP-binding</keyword>
<keyword id="KW-0963">Cytoplasm</keyword>
<keyword id="KW-0436">Ligase</keyword>
<keyword id="KW-0547">Nucleotide-binding</keyword>
<keyword id="KW-0648">Protein biosynthesis</keyword>
<reference key="1">
    <citation type="journal article" date="2009" name="Proc. Natl. Acad. Sci. U.S.A.">
        <title>Characterizing a model human gut microbiota composed of members of its two dominant bacterial phyla.</title>
        <authorList>
            <person name="Mahowald M.A."/>
            <person name="Rey F.E."/>
            <person name="Seedorf H."/>
            <person name="Turnbaugh P.J."/>
            <person name="Fulton R.S."/>
            <person name="Wollam A."/>
            <person name="Shah N."/>
            <person name="Wang C."/>
            <person name="Magrini V."/>
            <person name="Wilson R.K."/>
            <person name="Cantarel B.L."/>
            <person name="Coutinho P.M."/>
            <person name="Henrissat B."/>
            <person name="Crock L.W."/>
            <person name="Russell A."/>
            <person name="Verberkmoes N.C."/>
            <person name="Hettich R.L."/>
            <person name="Gordon J.I."/>
        </authorList>
    </citation>
    <scope>NUCLEOTIDE SEQUENCE [LARGE SCALE GENOMIC DNA]</scope>
    <source>
        <strain>ATCC 33656 / DSM 3377 / JCM 17463 / KCTC 5835 / LMG 30912 / VPI 0990</strain>
    </source>
</reference>
<feature type="chain" id="PRO_1000215562" description="Proline--tRNA ligase">
    <location>
        <begin position="1"/>
        <end position="479"/>
    </location>
</feature>
<accession>C4ZC24</accession>
<name>SYP_AGARV</name>
<sequence length="479" mass="54428">MAKEKKLVEAITSMEEDFTQWYTDVVKKAELMDYSSVKGCMIFKPNGYAIWENIQKNLDAMFKETGVENVYMPMFIPESLLQKEKDHVEGFAPEVAWVTQGGLETLQERLAVRPTSETLFCELFSKTVQSHRDLPKVYNQWCSVVRWEKTTRPFLRSSEFLWQEGHTVHATAEEAEARTVQMLNIYADFCEKYLAIPMVKGRKTDKEKFAGAEATYTIEALMHDGKALQSGTSHNFGDGFPKAFGIQYTDKDNKLQYCHETSWGVSTRLIGAIIMVHGDDSGLVLPPKIAPTQVMVIPIQQQKDGVLDKAYDLKDKLSKDFRVKIDATDKTPGWKFAAQEVQGISTRIEIGPKDIEKNQCVIVRRDTREKIVVSLDEVNEKLAEVLETMQNDMLEKAKAFLASHINDAHDYNEFKAIAETKPGFIRAMWCGDEACENKIKEDTTVTSRCMPFGDQEQISDVCVCCGKPAHKLVYWGKAY</sequence>
<dbReference type="EC" id="6.1.1.15" evidence="1"/>
<dbReference type="EMBL" id="CP001107">
    <property type="protein sequence ID" value="ACR74314.1"/>
    <property type="molecule type" value="Genomic_DNA"/>
</dbReference>
<dbReference type="RefSeq" id="WP_012741431.1">
    <property type="nucleotide sequence ID" value="NZ_CAXSYD010000003.1"/>
</dbReference>
<dbReference type="SMR" id="C4ZC24"/>
<dbReference type="STRING" id="515619.EUBREC_0523"/>
<dbReference type="PaxDb" id="515619-EUBREC_0523"/>
<dbReference type="GeneID" id="86987420"/>
<dbReference type="KEGG" id="ere:EUBREC_0523"/>
<dbReference type="HOGENOM" id="CLU_001882_4_2_9"/>
<dbReference type="Proteomes" id="UP000001477">
    <property type="component" value="Chromosome"/>
</dbReference>
<dbReference type="GO" id="GO:0017101">
    <property type="term" value="C:aminoacyl-tRNA synthetase multienzyme complex"/>
    <property type="evidence" value="ECO:0007669"/>
    <property type="project" value="TreeGrafter"/>
</dbReference>
<dbReference type="GO" id="GO:0005737">
    <property type="term" value="C:cytoplasm"/>
    <property type="evidence" value="ECO:0007669"/>
    <property type="project" value="UniProtKB-SubCell"/>
</dbReference>
<dbReference type="GO" id="GO:0005524">
    <property type="term" value="F:ATP binding"/>
    <property type="evidence" value="ECO:0007669"/>
    <property type="project" value="UniProtKB-UniRule"/>
</dbReference>
<dbReference type="GO" id="GO:0140096">
    <property type="term" value="F:catalytic activity, acting on a protein"/>
    <property type="evidence" value="ECO:0007669"/>
    <property type="project" value="UniProtKB-ARBA"/>
</dbReference>
<dbReference type="GO" id="GO:0004827">
    <property type="term" value="F:proline-tRNA ligase activity"/>
    <property type="evidence" value="ECO:0007669"/>
    <property type="project" value="UniProtKB-UniRule"/>
</dbReference>
<dbReference type="GO" id="GO:0016740">
    <property type="term" value="F:transferase activity"/>
    <property type="evidence" value="ECO:0007669"/>
    <property type="project" value="UniProtKB-ARBA"/>
</dbReference>
<dbReference type="GO" id="GO:0006433">
    <property type="term" value="P:prolyl-tRNA aminoacylation"/>
    <property type="evidence" value="ECO:0007669"/>
    <property type="project" value="UniProtKB-UniRule"/>
</dbReference>
<dbReference type="CDD" id="cd00862">
    <property type="entry name" value="ProRS_anticodon_zinc"/>
    <property type="match status" value="1"/>
</dbReference>
<dbReference type="CDD" id="cd00778">
    <property type="entry name" value="ProRS_core_arch_euk"/>
    <property type="match status" value="1"/>
</dbReference>
<dbReference type="FunFam" id="3.30.110.30:FF:000005">
    <property type="entry name" value="Proline--tRNA ligase"/>
    <property type="match status" value="1"/>
</dbReference>
<dbReference type="FunFam" id="3.30.930.10:FF:000023">
    <property type="entry name" value="Proline--tRNA ligase"/>
    <property type="match status" value="1"/>
</dbReference>
<dbReference type="Gene3D" id="3.40.50.800">
    <property type="entry name" value="Anticodon-binding domain"/>
    <property type="match status" value="1"/>
</dbReference>
<dbReference type="Gene3D" id="3.30.930.10">
    <property type="entry name" value="Bira Bifunctional Protein, Domain 2"/>
    <property type="match status" value="1"/>
</dbReference>
<dbReference type="Gene3D" id="3.30.110.30">
    <property type="entry name" value="C-terminal domain of ProRS"/>
    <property type="match status" value="1"/>
</dbReference>
<dbReference type="HAMAP" id="MF_01571">
    <property type="entry name" value="Pro_tRNA_synth_type3"/>
    <property type="match status" value="1"/>
</dbReference>
<dbReference type="InterPro" id="IPR002314">
    <property type="entry name" value="aa-tRNA-synt_IIb"/>
</dbReference>
<dbReference type="InterPro" id="IPR006195">
    <property type="entry name" value="aa-tRNA-synth_II"/>
</dbReference>
<dbReference type="InterPro" id="IPR045864">
    <property type="entry name" value="aa-tRNA-synth_II/BPL/LPL"/>
</dbReference>
<dbReference type="InterPro" id="IPR004154">
    <property type="entry name" value="Anticodon-bd"/>
</dbReference>
<dbReference type="InterPro" id="IPR036621">
    <property type="entry name" value="Anticodon-bd_dom_sf"/>
</dbReference>
<dbReference type="InterPro" id="IPR002316">
    <property type="entry name" value="Pro-tRNA-ligase_IIa"/>
</dbReference>
<dbReference type="InterPro" id="IPR004499">
    <property type="entry name" value="Pro-tRNA-ligase_IIa_arc-type"/>
</dbReference>
<dbReference type="InterPro" id="IPR016061">
    <property type="entry name" value="Pro-tRNA_ligase_II_C"/>
</dbReference>
<dbReference type="InterPro" id="IPR017449">
    <property type="entry name" value="Pro-tRNA_synth_II"/>
</dbReference>
<dbReference type="InterPro" id="IPR033721">
    <property type="entry name" value="ProRS_core_arch_euk"/>
</dbReference>
<dbReference type="NCBIfam" id="TIGR00408">
    <property type="entry name" value="proS_fam_I"/>
    <property type="match status" value="1"/>
</dbReference>
<dbReference type="PANTHER" id="PTHR43382:SF2">
    <property type="entry name" value="BIFUNCTIONAL GLUTAMATE_PROLINE--TRNA LIGASE"/>
    <property type="match status" value="1"/>
</dbReference>
<dbReference type="PANTHER" id="PTHR43382">
    <property type="entry name" value="PROLYL-TRNA SYNTHETASE"/>
    <property type="match status" value="1"/>
</dbReference>
<dbReference type="Pfam" id="PF03129">
    <property type="entry name" value="HGTP_anticodon"/>
    <property type="match status" value="1"/>
</dbReference>
<dbReference type="Pfam" id="PF09180">
    <property type="entry name" value="ProRS-C_1"/>
    <property type="match status" value="1"/>
</dbReference>
<dbReference type="Pfam" id="PF00587">
    <property type="entry name" value="tRNA-synt_2b"/>
    <property type="match status" value="1"/>
</dbReference>
<dbReference type="PRINTS" id="PR01046">
    <property type="entry name" value="TRNASYNTHPRO"/>
</dbReference>
<dbReference type="SMART" id="SM00946">
    <property type="entry name" value="ProRS-C_1"/>
    <property type="match status" value="1"/>
</dbReference>
<dbReference type="SUPFAM" id="SSF64586">
    <property type="entry name" value="C-terminal domain of ProRS"/>
    <property type="match status" value="1"/>
</dbReference>
<dbReference type="SUPFAM" id="SSF52954">
    <property type="entry name" value="Class II aaRS ABD-related"/>
    <property type="match status" value="1"/>
</dbReference>
<dbReference type="SUPFAM" id="SSF55681">
    <property type="entry name" value="Class II aaRS and biotin synthetases"/>
    <property type="match status" value="1"/>
</dbReference>
<dbReference type="PROSITE" id="PS50862">
    <property type="entry name" value="AA_TRNA_LIGASE_II"/>
    <property type="match status" value="1"/>
</dbReference>
<comment type="function">
    <text evidence="1">Catalyzes the attachment of proline to tRNA(Pro) in a two-step reaction: proline is first activated by ATP to form Pro-AMP and then transferred to the acceptor end of tRNA(Pro).</text>
</comment>
<comment type="catalytic activity">
    <reaction evidence="1">
        <text>tRNA(Pro) + L-proline + ATP = L-prolyl-tRNA(Pro) + AMP + diphosphate</text>
        <dbReference type="Rhea" id="RHEA:14305"/>
        <dbReference type="Rhea" id="RHEA-COMP:9700"/>
        <dbReference type="Rhea" id="RHEA-COMP:9702"/>
        <dbReference type="ChEBI" id="CHEBI:30616"/>
        <dbReference type="ChEBI" id="CHEBI:33019"/>
        <dbReference type="ChEBI" id="CHEBI:60039"/>
        <dbReference type="ChEBI" id="CHEBI:78442"/>
        <dbReference type="ChEBI" id="CHEBI:78532"/>
        <dbReference type="ChEBI" id="CHEBI:456215"/>
        <dbReference type="EC" id="6.1.1.15"/>
    </reaction>
</comment>
<comment type="subunit">
    <text evidence="1">Homodimer.</text>
</comment>
<comment type="subcellular location">
    <subcellularLocation>
        <location evidence="1">Cytoplasm</location>
    </subcellularLocation>
</comment>
<comment type="domain">
    <text evidence="1">Consists of three domains: the N-terminal catalytic domain, the anticodon-binding domain and the C-terminal extension.</text>
</comment>
<comment type="similarity">
    <text evidence="1">Belongs to the class-II aminoacyl-tRNA synthetase family. ProS type 3 subfamily.</text>
</comment>
<protein>
    <recommendedName>
        <fullName evidence="1">Proline--tRNA ligase</fullName>
        <ecNumber evidence="1">6.1.1.15</ecNumber>
    </recommendedName>
    <alternativeName>
        <fullName evidence="1">Prolyl-tRNA synthetase</fullName>
        <shortName evidence="1">ProRS</shortName>
    </alternativeName>
</protein>
<proteinExistence type="inferred from homology"/>